<evidence type="ECO:0000255" key="1">
    <source>
        <dbReference type="HAMAP-Rule" id="MF_00123"/>
    </source>
</evidence>
<comment type="catalytic activity">
    <reaction evidence="1">
        <text>tRNA(Arg) + L-arginine + ATP = L-arginyl-tRNA(Arg) + AMP + diphosphate</text>
        <dbReference type="Rhea" id="RHEA:20301"/>
        <dbReference type="Rhea" id="RHEA-COMP:9658"/>
        <dbReference type="Rhea" id="RHEA-COMP:9673"/>
        <dbReference type="ChEBI" id="CHEBI:30616"/>
        <dbReference type="ChEBI" id="CHEBI:32682"/>
        <dbReference type="ChEBI" id="CHEBI:33019"/>
        <dbReference type="ChEBI" id="CHEBI:78442"/>
        <dbReference type="ChEBI" id="CHEBI:78513"/>
        <dbReference type="ChEBI" id="CHEBI:456215"/>
        <dbReference type="EC" id="6.1.1.19"/>
    </reaction>
</comment>
<comment type="subunit">
    <text evidence="1">Monomer.</text>
</comment>
<comment type="subcellular location">
    <subcellularLocation>
        <location evidence="1">Cytoplasm</location>
    </subcellularLocation>
</comment>
<comment type="similarity">
    <text evidence="1">Belongs to the class-I aminoacyl-tRNA synthetase family.</text>
</comment>
<reference key="1">
    <citation type="journal article" date="2005" name="Nucleic Acids Res.">
        <title>Genome dynamics and diversity of Shigella species, the etiologic agents of bacillary dysentery.</title>
        <authorList>
            <person name="Yang F."/>
            <person name="Yang J."/>
            <person name="Zhang X."/>
            <person name="Chen L."/>
            <person name="Jiang Y."/>
            <person name="Yan Y."/>
            <person name="Tang X."/>
            <person name="Wang J."/>
            <person name="Xiong Z."/>
            <person name="Dong J."/>
            <person name="Xue Y."/>
            <person name="Zhu Y."/>
            <person name="Xu X."/>
            <person name="Sun L."/>
            <person name="Chen S."/>
            <person name="Nie H."/>
            <person name="Peng J."/>
            <person name="Xu J."/>
            <person name="Wang Y."/>
            <person name="Yuan Z."/>
            <person name="Wen Y."/>
            <person name="Yao Z."/>
            <person name="Shen Y."/>
            <person name="Qiang B."/>
            <person name="Hou Y."/>
            <person name="Yu J."/>
            <person name="Jin Q."/>
        </authorList>
    </citation>
    <scope>NUCLEOTIDE SEQUENCE [LARGE SCALE GENOMIC DNA]</scope>
    <source>
        <strain>Sd197</strain>
    </source>
</reference>
<dbReference type="EC" id="6.1.1.19" evidence="1"/>
<dbReference type="EMBL" id="CP000034">
    <property type="protein sequence ID" value="ABB61336.1"/>
    <property type="molecule type" value="Genomic_DNA"/>
</dbReference>
<dbReference type="RefSeq" id="WP_001025331.1">
    <property type="nucleotide sequence ID" value="NC_007606.1"/>
</dbReference>
<dbReference type="RefSeq" id="YP_402827.1">
    <property type="nucleotide sequence ID" value="NC_007606.1"/>
</dbReference>
<dbReference type="SMR" id="Q32H69"/>
<dbReference type="STRING" id="300267.SDY_1180"/>
<dbReference type="EnsemblBacteria" id="ABB61336">
    <property type="protein sequence ID" value="ABB61336"/>
    <property type="gene ID" value="SDY_1180"/>
</dbReference>
<dbReference type="KEGG" id="sdy:SDY_1180"/>
<dbReference type="PATRIC" id="fig|300267.13.peg.1394"/>
<dbReference type="HOGENOM" id="CLU_006406_5_1_6"/>
<dbReference type="Proteomes" id="UP000002716">
    <property type="component" value="Chromosome"/>
</dbReference>
<dbReference type="GO" id="GO:0005737">
    <property type="term" value="C:cytoplasm"/>
    <property type="evidence" value="ECO:0007669"/>
    <property type="project" value="UniProtKB-SubCell"/>
</dbReference>
<dbReference type="GO" id="GO:0004814">
    <property type="term" value="F:arginine-tRNA ligase activity"/>
    <property type="evidence" value="ECO:0007669"/>
    <property type="project" value="UniProtKB-UniRule"/>
</dbReference>
<dbReference type="GO" id="GO:0005524">
    <property type="term" value="F:ATP binding"/>
    <property type="evidence" value="ECO:0007669"/>
    <property type="project" value="UniProtKB-UniRule"/>
</dbReference>
<dbReference type="GO" id="GO:0006420">
    <property type="term" value="P:arginyl-tRNA aminoacylation"/>
    <property type="evidence" value="ECO:0007669"/>
    <property type="project" value="UniProtKB-UniRule"/>
</dbReference>
<dbReference type="CDD" id="cd07956">
    <property type="entry name" value="Anticodon_Ia_Arg"/>
    <property type="match status" value="1"/>
</dbReference>
<dbReference type="CDD" id="cd00671">
    <property type="entry name" value="ArgRS_core"/>
    <property type="match status" value="1"/>
</dbReference>
<dbReference type="FunFam" id="1.10.730.10:FF:000001">
    <property type="entry name" value="Arginine--tRNA ligase"/>
    <property type="match status" value="1"/>
</dbReference>
<dbReference type="FunFam" id="3.30.1360.70:FF:000001">
    <property type="entry name" value="Arginine--tRNA ligase"/>
    <property type="match status" value="1"/>
</dbReference>
<dbReference type="FunFam" id="3.40.50.620:FF:000030">
    <property type="entry name" value="Arginine--tRNA ligase"/>
    <property type="match status" value="1"/>
</dbReference>
<dbReference type="Gene3D" id="3.30.1360.70">
    <property type="entry name" value="Arginyl tRNA synthetase N-terminal domain"/>
    <property type="match status" value="1"/>
</dbReference>
<dbReference type="Gene3D" id="3.40.50.620">
    <property type="entry name" value="HUPs"/>
    <property type="match status" value="1"/>
</dbReference>
<dbReference type="Gene3D" id="1.10.730.10">
    <property type="entry name" value="Isoleucyl-tRNA Synthetase, Domain 1"/>
    <property type="match status" value="1"/>
</dbReference>
<dbReference type="HAMAP" id="MF_00123">
    <property type="entry name" value="Arg_tRNA_synth"/>
    <property type="match status" value="1"/>
</dbReference>
<dbReference type="InterPro" id="IPR001412">
    <property type="entry name" value="aa-tRNA-synth_I_CS"/>
</dbReference>
<dbReference type="InterPro" id="IPR001278">
    <property type="entry name" value="Arg-tRNA-ligase"/>
</dbReference>
<dbReference type="InterPro" id="IPR005148">
    <property type="entry name" value="Arg-tRNA-synth_N"/>
</dbReference>
<dbReference type="InterPro" id="IPR036695">
    <property type="entry name" value="Arg-tRNA-synth_N_sf"/>
</dbReference>
<dbReference type="InterPro" id="IPR035684">
    <property type="entry name" value="ArgRS_core"/>
</dbReference>
<dbReference type="InterPro" id="IPR008909">
    <property type="entry name" value="DALR_anticod-bd"/>
</dbReference>
<dbReference type="InterPro" id="IPR014729">
    <property type="entry name" value="Rossmann-like_a/b/a_fold"/>
</dbReference>
<dbReference type="InterPro" id="IPR009080">
    <property type="entry name" value="tRNAsynth_Ia_anticodon-bd"/>
</dbReference>
<dbReference type="NCBIfam" id="TIGR00456">
    <property type="entry name" value="argS"/>
    <property type="match status" value="1"/>
</dbReference>
<dbReference type="PANTHER" id="PTHR11956:SF5">
    <property type="entry name" value="ARGININE--TRNA LIGASE, CYTOPLASMIC"/>
    <property type="match status" value="1"/>
</dbReference>
<dbReference type="PANTHER" id="PTHR11956">
    <property type="entry name" value="ARGINYL-TRNA SYNTHETASE"/>
    <property type="match status" value="1"/>
</dbReference>
<dbReference type="Pfam" id="PF03485">
    <property type="entry name" value="Arg_tRNA_synt_N"/>
    <property type="match status" value="1"/>
</dbReference>
<dbReference type="Pfam" id="PF05746">
    <property type="entry name" value="DALR_1"/>
    <property type="match status" value="1"/>
</dbReference>
<dbReference type="Pfam" id="PF00750">
    <property type="entry name" value="tRNA-synt_1d"/>
    <property type="match status" value="1"/>
</dbReference>
<dbReference type="PRINTS" id="PR01038">
    <property type="entry name" value="TRNASYNTHARG"/>
</dbReference>
<dbReference type="SMART" id="SM01016">
    <property type="entry name" value="Arg_tRNA_synt_N"/>
    <property type="match status" value="1"/>
</dbReference>
<dbReference type="SMART" id="SM00836">
    <property type="entry name" value="DALR_1"/>
    <property type="match status" value="1"/>
</dbReference>
<dbReference type="SUPFAM" id="SSF47323">
    <property type="entry name" value="Anticodon-binding domain of a subclass of class I aminoacyl-tRNA synthetases"/>
    <property type="match status" value="1"/>
</dbReference>
<dbReference type="SUPFAM" id="SSF55190">
    <property type="entry name" value="Arginyl-tRNA synthetase (ArgRS), N-terminal 'additional' domain"/>
    <property type="match status" value="1"/>
</dbReference>
<dbReference type="SUPFAM" id="SSF52374">
    <property type="entry name" value="Nucleotidylyl transferase"/>
    <property type="match status" value="1"/>
</dbReference>
<dbReference type="PROSITE" id="PS00178">
    <property type="entry name" value="AA_TRNA_LIGASE_I"/>
    <property type="match status" value="1"/>
</dbReference>
<accession>Q32H69</accession>
<protein>
    <recommendedName>
        <fullName evidence="1">Arginine--tRNA ligase</fullName>
        <ecNumber evidence="1">6.1.1.19</ecNumber>
    </recommendedName>
    <alternativeName>
        <fullName evidence="1">Arginyl-tRNA synthetase</fullName>
        <shortName evidence="1">ArgRS</shortName>
    </alternativeName>
</protein>
<feature type="chain" id="PRO_0000242091" description="Arginine--tRNA ligase">
    <location>
        <begin position="1"/>
        <end position="577"/>
    </location>
</feature>
<feature type="short sequence motif" description="'HIGH' region">
    <location>
        <begin position="122"/>
        <end position="132"/>
    </location>
</feature>
<name>SYR_SHIDS</name>
<sequence>MNIQALLSEKVRQAMIAAGAPADCEPQVRQSAKVQFGDYQANGMMAVAKKLGMAPRQLAEQVLTHLDLNGIASKVEIAGPGFINIFLDPAFLAEHVQQALASDRLGVATPEKQTIVVDYSAPNVAKEMHVGHLRSTIIGDAAVRTLEFLGHKVIRANHVGDWGTQFGMLIAWLEKQQQENAGEMELADLEGFYRDAKKHYDEDEEFAERARNYVVKLQSGDEYFREMWRKLVDITMTQNQITYDRLNVTLTRDDVMGESLYNPMLPGIVADLKAKGLAVESEGATVVFLDEFKNKEGEPMGVIIQKKDGGYLYTTTDIACAKYRYETLHAERVLYYIDSRQHQHLMQAWAIVRKAGYVPESVPLEHHMFGMMLGKDGKPFKTRAGGTVKLADLLDEALERARRLVAEKNPDMSADELEKLANAVGIGAVKYADLSKNRTTDYIFDWDNMLAFEGNTAPYMQYAYTRVLSVFRKAEIDEEQLAAAPVIIREDREAQLAARLLQFEETLTVVAREGTPHVMCAYLYDLAGLFSGFYEHCPILSAENEEVRNSRLKLAQLTAKTLKLGLDTLGIETVERM</sequence>
<keyword id="KW-0030">Aminoacyl-tRNA synthetase</keyword>
<keyword id="KW-0067">ATP-binding</keyword>
<keyword id="KW-0963">Cytoplasm</keyword>
<keyword id="KW-0436">Ligase</keyword>
<keyword id="KW-0547">Nucleotide-binding</keyword>
<keyword id="KW-0648">Protein biosynthesis</keyword>
<keyword id="KW-1185">Reference proteome</keyword>
<gene>
    <name evidence="1" type="primary">argS</name>
    <name type="ordered locus">SDY_1180</name>
</gene>
<proteinExistence type="inferred from homology"/>
<organism>
    <name type="scientific">Shigella dysenteriae serotype 1 (strain Sd197)</name>
    <dbReference type="NCBI Taxonomy" id="300267"/>
    <lineage>
        <taxon>Bacteria</taxon>
        <taxon>Pseudomonadati</taxon>
        <taxon>Pseudomonadota</taxon>
        <taxon>Gammaproteobacteria</taxon>
        <taxon>Enterobacterales</taxon>
        <taxon>Enterobacteriaceae</taxon>
        <taxon>Shigella</taxon>
    </lineage>
</organism>